<organism>
    <name type="scientific">Escherichia coli O127:H6 (strain E2348/69 / EPEC)</name>
    <dbReference type="NCBI Taxonomy" id="574521"/>
    <lineage>
        <taxon>Bacteria</taxon>
        <taxon>Pseudomonadati</taxon>
        <taxon>Pseudomonadota</taxon>
        <taxon>Gammaproteobacteria</taxon>
        <taxon>Enterobacterales</taxon>
        <taxon>Enterobacteriaceae</taxon>
        <taxon>Escherichia</taxon>
    </lineage>
</organism>
<gene>
    <name evidence="1" type="primary">cmoA</name>
    <name type="ordered locus">E2348C_1995</name>
</gene>
<accession>B7USP7</accession>
<name>CMOA_ECO27</name>
<keyword id="KW-1185">Reference proteome</keyword>
<keyword id="KW-0949">S-adenosyl-L-methionine</keyword>
<keyword id="KW-0808">Transferase</keyword>
<feature type="chain" id="PRO_1000185683" description="Carboxy-S-adenosyl-L-methionine synthase">
    <location>
        <begin position="1"/>
        <end position="247"/>
    </location>
</feature>
<feature type="binding site" evidence="1">
    <location>
        <position position="39"/>
    </location>
    <ligand>
        <name>S-adenosyl-L-methionine</name>
        <dbReference type="ChEBI" id="CHEBI:59789"/>
    </ligand>
</feature>
<feature type="binding site" evidence="1">
    <location>
        <begin position="64"/>
        <end position="66"/>
    </location>
    <ligand>
        <name>S-adenosyl-L-methionine</name>
        <dbReference type="ChEBI" id="CHEBI:59789"/>
    </ligand>
</feature>
<feature type="binding site" evidence="1">
    <location>
        <begin position="89"/>
        <end position="90"/>
    </location>
    <ligand>
        <name>S-adenosyl-L-methionine</name>
        <dbReference type="ChEBI" id="CHEBI:59789"/>
    </ligand>
</feature>
<feature type="binding site" evidence="1">
    <location>
        <begin position="117"/>
        <end position="118"/>
    </location>
    <ligand>
        <name>S-adenosyl-L-methionine</name>
        <dbReference type="ChEBI" id="CHEBI:59789"/>
    </ligand>
</feature>
<feature type="binding site" evidence="1">
    <location>
        <position position="132"/>
    </location>
    <ligand>
        <name>S-adenosyl-L-methionine</name>
        <dbReference type="ChEBI" id="CHEBI:59789"/>
    </ligand>
</feature>
<feature type="binding site" evidence="1">
    <location>
        <position position="199"/>
    </location>
    <ligand>
        <name>S-adenosyl-L-methionine</name>
        <dbReference type="ChEBI" id="CHEBI:59789"/>
    </ligand>
</feature>
<dbReference type="EC" id="2.1.3.-" evidence="1"/>
<dbReference type="EMBL" id="FM180568">
    <property type="protein sequence ID" value="CAS09543.1"/>
    <property type="molecule type" value="Genomic_DNA"/>
</dbReference>
<dbReference type="RefSeq" id="WP_000019589.1">
    <property type="nucleotide sequence ID" value="NC_011601.1"/>
</dbReference>
<dbReference type="SMR" id="B7USP7"/>
<dbReference type="KEGG" id="ecg:E2348C_1995"/>
<dbReference type="HOGENOM" id="CLU_078475_0_0_6"/>
<dbReference type="Proteomes" id="UP000008205">
    <property type="component" value="Chromosome"/>
</dbReference>
<dbReference type="GO" id="GO:0016743">
    <property type="term" value="F:carboxyl- or carbamoyltransferase activity"/>
    <property type="evidence" value="ECO:0007669"/>
    <property type="project" value="UniProtKB-UniRule"/>
</dbReference>
<dbReference type="GO" id="GO:1904047">
    <property type="term" value="F:S-adenosyl-L-methionine binding"/>
    <property type="evidence" value="ECO:0007669"/>
    <property type="project" value="UniProtKB-UniRule"/>
</dbReference>
<dbReference type="GO" id="GO:0002098">
    <property type="term" value="P:tRNA wobble uridine modification"/>
    <property type="evidence" value="ECO:0007669"/>
    <property type="project" value="InterPro"/>
</dbReference>
<dbReference type="CDD" id="cd02440">
    <property type="entry name" value="AdoMet_MTases"/>
    <property type="match status" value="1"/>
</dbReference>
<dbReference type="FunFam" id="3.40.50.150:FF:000030">
    <property type="entry name" value="Carboxy-S-adenosyl-L-methionine synthase"/>
    <property type="match status" value="1"/>
</dbReference>
<dbReference type="Gene3D" id="3.40.50.150">
    <property type="entry name" value="Vaccinia Virus protein VP39"/>
    <property type="match status" value="1"/>
</dbReference>
<dbReference type="HAMAP" id="MF_01589">
    <property type="entry name" value="Cx_SAM_synthase"/>
    <property type="match status" value="1"/>
</dbReference>
<dbReference type="InterPro" id="IPR005271">
    <property type="entry name" value="CmoA"/>
</dbReference>
<dbReference type="InterPro" id="IPR041698">
    <property type="entry name" value="Methyltransf_25"/>
</dbReference>
<dbReference type="InterPro" id="IPR029063">
    <property type="entry name" value="SAM-dependent_MTases_sf"/>
</dbReference>
<dbReference type="NCBIfam" id="TIGR00740">
    <property type="entry name" value="carboxy-S-adenosyl-L-methionine synthase CmoA"/>
    <property type="match status" value="1"/>
</dbReference>
<dbReference type="NCBIfam" id="NF011995">
    <property type="entry name" value="PRK15451.1"/>
    <property type="match status" value="1"/>
</dbReference>
<dbReference type="PANTHER" id="PTHR43861:SF2">
    <property type="entry name" value="CARBOXY-S-ADENOSYL-L-METHIONINE SYNTHASE"/>
    <property type="match status" value="1"/>
</dbReference>
<dbReference type="PANTHER" id="PTHR43861">
    <property type="entry name" value="TRANS-ACONITATE 2-METHYLTRANSFERASE-RELATED"/>
    <property type="match status" value="1"/>
</dbReference>
<dbReference type="Pfam" id="PF13649">
    <property type="entry name" value="Methyltransf_25"/>
    <property type="match status" value="1"/>
</dbReference>
<dbReference type="PIRSF" id="PIRSF006325">
    <property type="entry name" value="MeTrfase_bac"/>
    <property type="match status" value="1"/>
</dbReference>
<dbReference type="SUPFAM" id="SSF53335">
    <property type="entry name" value="S-adenosyl-L-methionine-dependent methyltransferases"/>
    <property type="match status" value="1"/>
</dbReference>
<evidence type="ECO:0000255" key="1">
    <source>
        <dbReference type="HAMAP-Rule" id="MF_01589"/>
    </source>
</evidence>
<comment type="function">
    <text evidence="1">Catalyzes the conversion of S-adenosyl-L-methionine (SAM) to carboxy-S-adenosyl-L-methionine (Cx-SAM).</text>
</comment>
<comment type="catalytic activity">
    <reaction evidence="1">
        <text>prephenate + S-adenosyl-L-methionine = carboxy-S-adenosyl-L-methionine + 3-phenylpyruvate + H2O</text>
        <dbReference type="Rhea" id="RHEA:51692"/>
        <dbReference type="ChEBI" id="CHEBI:15377"/>
        <dbReference type="ChEBI" id="CHEBI:18005"/>
        <dbReference type="ChEBI" id="CHEBI:29934"/>
        <dbReference type="ChEBI" id="CHEBI:59789"/>
        <dbReference type="ChEBI" id="CHEBI:134278"/>
    </reaction>
</comment>
<comment type="subunit">
    <text evidence="1">Homodimer.</text>
</comment>
<comment type="similarity">
    <text evidence="1">Belongs to the class I-like SAM-binding methyltransferase superfamily. Cx-SAM synthase family.</text>
</comment>
<proteinExistence type="inferred from homology"/>
<protein>
    <recommendedName>
        <fullName evidence="1">Carboxy-S-adenosyl-L-methionine synthase</fullName>
        <shortName evidence="1">Cx-SAM synthase</shortName>
        <ecNumber evidence="1">2.1.3.-</ecNumber>
    </recommendedName>
</protein>
<reference key="1">
    <citation type="journal article" date="2009" name="J. Bacteriol.">
        <title>Complete genome sequence and comparative genome analysis of enteropathogenic Escherichia coli O127:H6 strain E2348/69.</title>
        <authorList>
            <person name="Iguchi A."/>
            <person name="Thomson N.R."/>
            <person name="Ogura Y."/>
            <person name="Saunders D."/>
            <person name="Ooka T."/>
            <person name="Henderson I.R."/>
            <person name="Harris D."/>
            <person name="Asadulghani M."/>
            <person name="Kurokawa K."/>
            <person name="Dean P."/>
            <person name="Kenny B."/>
            <person name="Quail M.A."/>
            <person name="Thurston S."/>
            <person name="Dougan G."/>
            <person name="Hayashi T."/>
            <person name="Parkhill J."/>
            <person name="Frankel G."/>
        </authorList>
    </citation>
    <scope>NUCLEOTIDE SEQUENCE [LARGE SCALE GENOMIC DNA]</scope>
    <source>
        <strain>E2348/69 / EPEC</strain>
    </source>
</reference>
<sequence>MSHRDTLFSAPIARLGDWTFDERVAEVFPDMIQRSVPGYSNIISMIGMLAERFVQPGTQVYDLGCSLGAATLSVRRNIHHDNCKIIAIDNSPAMIERCRRHIDAYKAPTPVDVIEGDIRDIAIENASMVVLNFTLQFLEPSERQALLDKIYQGLNPGGALVLSEKFSFEDAKVGELLFNMHHDFKRANGYSELEISQKRSMLENVMLTDSVETHKARLHKAGFEHSELWFQCFNFGSLVTLKAEDAA</sequence>